<protein>
    <recommendedName>
        <fullName>Scm-like with four MBT domains protein 1</fullName>
        <shortName>hSFMBT</shortName>
    </recommendedName>
    <alternativeName>
        <fullName>Renal ubiquitous protein 1</fullName>
    </alternativeName>
</protein>
<sequence length="866" mass="98141">MNGEQQLDADAGSGMEEVELSWEDYLEETGSTAVPYGSFKHVDTRLQNGFAPGMKLEVAVRTDPETYWVATVITTCEQLLLLRYDGYGEDRRADFWCDIRKADLYPIGWCEQNKKTLEAPEGIRDKVSDWDEFLRQTLIGACSPPVPLLEGLRNGRNPLDLIAPGSRLECQAFQDSLSTWIVTVVENIGGRLKLRYEGLESSDNYEHWLYYLDPFLHHVGWAAQQGYELQPPSAIRHLKNEAEWQEILAKVKEEEEEPLPSYLFKDKQVIGIHTFSVNMKLEAVDPWSPFGISPATVVKVFDEKYFLVEMDDLRPENHARRSFVCHADSPGIFPVQWSLKNGLHISPPPGYPSQDFDWADYLKQCGAEAAPQRCFPPLISEHEFKENMKLEAVNPILPEEVCVATITAVRGSYLWLQLEGSKKPIPECIVSVESMDIFPLGWCETNGHPLSTPRRARVYKQRKIAVVQPEKQVPSSRTVHEGLRNQELNSTESVMINGKYCCPKIYFNHRCFSGPYLNKGRIAELPQCVGPGNCVLVLREVLTLLINAAYKPSRVLRELQLDKDSVWHGCGEVLKAKYKGKSYRATVEIVKTADRVTEFCRQTCIKLECCPNLFGPRMVLDKCSENCSVLTKTKYTHYYGKKKNKRIGRPPGGHSNLACALKKASKRRKRRKNVFVHKKKRSSASVDNTPAGSPQGSGGEDEDDPDEGDDDSLSEGSTSEQQDELQEESEMSEKKSCSSSPTQSEISTSLPPDRQRRKRELRTFSFSDDENKPPSPKEIRIEVAERLHLDSNPLKWSVADVVRFIRSTDCAPLARIFLDQEIDGQALLLLTLPTVQECMDLKLGPAIKLCHHIERIKFAFYEQFAN</sequence>
<organism>
    <name type="scientific">Homo sapiens</name>
    <name type="common">Human</name>
    <dbReference type="NCBI Taxonomy" id="9606"/>
    <lineage>
        <taxon>Eukaryota</taxon>
        <taxon>Metazoa</taxon>
        <taxon>Chordata</taxon>
        <taxon>Craniata</taxon>
        <taxon>Vertebrata</taxon>
        <taxon>Euteleostomi</taxon>
        <taxon>Mammalia</taxon>
        <taxon>Eutheria</taxon>
        <taxon>Euarchontoglires</taxon>
        <taxon>Primates</taxon>
        <taxon>Haplorrhini</taxon>
        <taxon>Catarrhini</taxon>
        <taxon>Hominidae</taxon>
        <taxon>Homo</taxon>
    </lineage>
</organism>
<gene>
    <name type="primary">SFMBT1</name>
    <name type="synonym">RU1</name>
</gene>
<dbReference type="EMBL" id="AF168132">
    <property type="protein sequence ID" value="AAF19794.1"/>
    <property type="molecule type" value="mRNA"/>
</dbReference>
<dbReference type="EMBL" id="AB189472">
    <property type="protein sequence ID" value="BAE43835.1"/>
    <property type="molecule type" value="mRNA"/>
</dbReference>
<dbReference type="EMBL" id="AK313965">
    <property type="protein sequence ID" value="BAG36680.1"/>
    <property type="molecule type" value="mRNA"/>
</dbReference>
<dbReference type="EMBL" id="AC099667">
    <property type="status" value="NOT_ANNOTATED_CDS"/>
    <property type="molecule type" value="Genomic_DNA"/>
</dbReference>
<dbReference type="EMBL" id="CH471055">
    <property type="protein sequence ID" value="EAW65272.1"/>
    <property type="molecule type" value="Genomic_DNA"/>
</dbReference>
<dbReference type="EMBL" id="BC014614">
    <property type="protein sequence ID" value="AAH14614.1"/>
    <property type="molecule type" value="mRNA"/>
</dbReference>
<dbReference type="EMBL" id="AL080140">
    <property type="protein sequence ID" value="CAB45734.1"/>
    <property type="molecule type" value="mRNA"/>
</dbReference>
<dbReference type="CCDS" id="CCDS2867.1">
    <molecule id="Q9UHJ3-1"/>
</dbReference>
<dbReference type="PIR" id="T12525">
    <property type="entry name" value="T12525"/>
</dbReference>
<dbReference type="RefSeq" id="NP_057413.2">
    <molecule id="Q9UHJ3-1"/>
    <property type="nucleotide sequence ID" value="NM_016329.3"/>
</dbReference>
<dbReference type="RefSeq" id="XP_005265278.1">
    <property type="nucleotide sequence ID" value="XM_005265221.3"/>
</dbReference>
<dbReference type="RefSeq" id="XP_006713266.1">
    <property type="nucleotide sequence ID" value="XM_006713203.3"/>
</dbReference>
<dbReference type="RefSeq" id="XP_006713267.1">
    <property type="nucleotide sequence ID" value="XM_006713204.3"/>
</dbReference>
<dbReference type="RefSeq" id="XP_011532126.1">
    <property type="nucleotide sequence ID" value="XM_011533824.2"/>
</dbReference>
<dbReference type="RefSeq" id="XP_011532127.1">
    <property type="nucleotide sequence ID" value="XM_011533825.2"/>
</dbReference>
<dbReference type="SMR" id="Q9UHJ3"/>
<dbReference type="BioGRID" id="119553">
    <property type="interactions" value="52"/>
</dbReference>
<dbReference type="FunCoup" id="Q9UHJ3">
    <property type="interactions" value="2038"/>
</dbReference>
<dbReference type="IntAct" id="Q9UHJ3">
    <property type="interactions" value="49"/>
</dbReference>
<dbReference type="MINT" id="Q9UHJ3"/>
<dbReference type="STRING" id="9606.ENSP00000378235"/>
<dbReference type="BindingDB" id="Q9UHJ3"/>
<dbReference type="ChEMBL" id="CHEMBL1764944"/>
<dbReference type="GlyGen" id="Q9UHJ3">
    <property type="glycosylation" value="1 site"/>
</dbReference>
<dbReference type="iPTMnet" id="Q9UHJ3"/>
<dbReference type="PhosphoSitePlus" id="Q9UHJ3"/>
<dbReference type="BioMuta" id="SFMBT1"/>
<dbReference type="DMDM" id="67461585"/>
<dbReference type="jPOST" id="Q9UHJ3"/>
<dbReference type="MassIVE" id="Q9UHJ3"/>
<dbReference type="PaxDb" id="9606-ENSP00000378235"/>
<dbReference type="PeptideAtlas" id="Q9UHJ3"/>
<dbReference type="ProteomicsDB" id="84362">
    <molecule id="Q9UHJ3-1"/>
</dbReference>
<dbReference type="ProteomicsDB" id="84363">
    <molecule id="Q9UHJ3-2"/>
</dbReference>
<dbReference type="Pumba" id="Q9UHJ3"/>
<dbReference type="ABCD" id="Q9UHJ3">
    <property type="antibodies" value="1 sequenced antibody"/>
</dbReference>
<dbReference type="Antibodypedia" id="31362">
    <property type="antibodies" value="141 antibodies from 20 providers"/>
</dbReference>
<dbReference type="DNASU" id="51460"/>
<dbReference type="Ensembl" id="ENST00000394752.8">
    <molecule id="Q9UHJ3-1"/>
    <property type="protein sequence ID" value="ENSP00000378235.2"/>
    <property type="gene ID" value="ENSG00000163935.14"/>
</dbReference>
<dbReference type="GeneID" id="51460"/>
<dbReference type="KEGG" id="hsa:51460"/>
<dbReference type="MANE-Select" id="ENST00000394752.8">
    <property type="protein sequence ID" value="ENSP00000378235.2"/>
    <property type="RefSeq nucleotide sequence ID" value="NM_016329.4"/>
    <property type="RefSeq protein sequence ID" value="NP_057413.2"/>
</dbReference>
<dbReference type="UCSC" id="uc003dgh.4">
    <molecule id="Q9UHJ3-1"/>
    <property type="organism name" value="human"/>
</dbReference>
<dbReference type="AGR" id="HGNC:20255"/>
<dbReference type="CTD" id="51460"/>
<dbReference type="DisGeNET" id="51460"/>
<dbReference type="GeneCards" id="SFMBT1"/>
<dbReference type="HGNC" id="HGNC:20255">
    <property type="gene designation" value="SFMBT1"/>
</dbReference>
<dbReference type="HPA" id="ENSG00000163935">
    <property type="expression patterns" value="Tissue enhanced (testis)"/>
</dbReference>
<dbReference type="MIM" id="607319">
    <property type="type" value="gene"/>
</dbReference>
<dbReference type="neXtProt" id="NX_Q9UHJ3"/>
<dbReference type="OpenTargets" id="ENSG00000163935"/>
<dbReference type="PharmGKB" id="PA134898464"/>
<dbReference type="VEuPathDB" id="HostDB:ENSG00000163935"/>
<dbReference type="eggNOG" id="KOG3766">
    <property type="taxonomic scope" value="Eukaryota"/>
</dbReference>
<dbReference type="GeneTree" id="ENSGT00940000157363"/>
<dbReference type="HOGENOM" id="CLU_005352_0_0_1"/>
<dbReference type="InParanoid" id="Q9UHJ3"/>
<dbReference type="OMA" id="HWSLKNG"/>
<dbReference type="OrthoDB" id="5917609at2759"/>
<dbReference type="PAN-GO" id="Q9UHJ3">
    <property type="GO annotations" value="4 GO annotations based on evolutionary models"/>
</dbReference>
<dbReference type="PhylomeDB" id="Q9UHJ3"/>
<dbReference type="TreeFam" id="TF316498"/>
<dbReference type="PathwayCommons" id="Q9UHJ3"/>
<dbReference type="SignaLink" id="Q9UHJ3"/>
<dbReference type="BioGRID-ORCS" id="51460">
    <property type="hits" value="12 hits in 1157 CRISPR screens"/>
</dbReference>
<dbReference type="ChiTaRS" id="SFMBT1">
    <property type="organism name" value="human"/>
</dbReference>
<dbReference type="GenomeRNAi" id="51460"/>
<dbReference type="Pharos" id="Q9UHJ3">
    <property type="development level" value="Tbio"/>
</dbReference>
<dbReference type="PRO" id="PR:Q9UHJ3"/>
<dbReference type="Proteomes" id="UP000005640">
    <property type="component" value="Chromosome 3"/>
</dbReference>
<dbReference type="RNAct" id="Q9UHJ3">
    <property type="molecule type" value="protein"/>
</dbReference>
<dbReference type="Bgee" id="ENSG00000163935">
    <property type="expression patterns" value="Expressed in sperm and 171 other cell types or tissues"/>
</dbReference>
<dbReference type="ExpressionAtlas" id="Q9UHJ3">
    <property type="expression patterns" value="baseline and differential"/>
</dbReference>
<dbReference type="GO" id="GO:0005654">
    <property type="term" value="C:nucleoplasm"/>
    <property type="evidence" value="ECO:0000314"/>
    <property type="project" value="HPA"/>
</dbReference>
<dbReference type="GO" id="GO:0005634">
    <property type="term" value="C:nucleus"/>
    <property type="evidence" value="ECO:0000314"/>
    <property type="project" value="UniProtKB"/>
</dbReference>
<dbReference type="GO" id="GO:0003682">
    <property type="term" value="F:chromatin binding"/>
    <property type="evidence" value="ECO:0000318"/>
    <property type="project" value="GO_Central"/>
</dbReference>
<dbReference type="GO" id="GO:0042393">
    <property type="term" value="F:histone binding"/>
    <property type="evidence" value="ECO:0000314"/>
    <property type="project" value="UniProtKB"/>
</dbReference>
<dbReference type="GO" id="GO:0003714">
    <property type="term" value="F:transcription corepressor activity"/>
    <property type="evidence" value="ECO:0000304"/>
    <property type="project" value="UniProtKB"/>
</dbReference>
<dbReference type="GO" id="GO:0030154">
    <property type="term" value="P:cell differentiation"/>
    <property type="evidence" value="ECO:0007669"/>
    <property type="project" value="UniProtKB-KW"/>
</dbReference>
<dbReference type="GO" id="GO:0006325">
    <property type="term" value="P:chromatin organization"/>
    <property type="evidence" value="ECO:0007669"/>
    <property type="project" value="UniProtKB-KW"/>
</dbReference>
<dbReference type="GO" id="GO:0045892">
    <property type="term" value="P:negative regulation of DNA-templated transcription"/>
    <property type="evidence" value="ECO:0000314"/>
    <property type="project" value="UniProtKB"/>
</dbReference>
<dbReference type="GO" id="GO:0048635">
    <property type="term" value="P:negative regulation of muscle organ development"/>
    <property type="evidence" value="ECO:0000315"/>
    <property type="project" value="UniProtKB"/>
</dbReference>
<dbReference type="GO" id="GO:0007283">
    <property type="term" value="P:spermatogenesis"/>
    <property type="evidence" value="ECO:0007669"/>
    <property type="project" value="UniProtKB-KW"/>
</dbReference>
<dbReference type="CDD" id="cd20111">
    <property type="entry name" value="MBT_SFMBT1_rpt1"/>
    <property type="match status" value="1"/>
</dbReference>
<dbReference type="CDD" id="cd20113">
    <property type="entry name" value="MBT_SFMBT1_rpt2"/>
    <property type="match status" value="1"/>
</dbReference>
<dbReference type="CDD" id="cd20115">
    <property type="entry name" value="MBT_SFMBT1_rpt3"/>
    <property type="match status" value="1"/>
</dbReference>
<dbReference type="CDD" id="cd20117">
    <property type="entry name" value="MBT_SFMBT1_rpt4"/>
    <property type="match status" value="1"/>
</dbReference>
<dbReference type="CDD" id="cd09581">
    <property type="entry name" value="SAM_Scm-like-4MBT1_2"/>
    <property type="match status" value="1"/>
</dbReference>
<dbReference type="FunFam" id="2.30.30.140:FF:000010">
    <property type="entry name" value="MBT domain-containing protein 1 isoform X1"/>
    <property type="match status" value="1"/>
</dbReference>
<dbReference type="FunFam" id="2.30.30.140:FF:000072">
    <property type="entry name" value="Scm like with four mbt domains 2"/>
    <property type="match status" value="1"/>
</dbReference>
<dbReference type="FunFam" id="2.30.30.140:FF:000041">
    <property type="entry name" value="Scm-like with four mbt domains 1, isoform CRA_b"/>
    <property type="match status" value="1"/>
</dbReference>
<dbReference type="FunFam" id="2.30.30.140:FF:000060">
    <property type="entry name" value="Scm-like with four mbt domains 1, isoform CRA_b"/>
    <property type="match status" value="1"/>
</dbReference>
<dbReference type="FunFam" id="3.90.1150.190:FF:000002">
    <property type="entry name" value="Scm-like with four MBT domains protein 2"/>
    <property type="match status" value="1"/>
</dbReference>
<dbReference type="FunFam" id="1.10.150.50:FF:000027">
    <property type="entry name" value="scm-like with four MBT domains protein 2"/>
    <property type="match status" value="1"/>
</dbReference>
<dbReference type="Gene3D" id="2.30.30.140">
    <property type="match status" value="4"/>
</dbReference>
<dbReference type="Gene3D" id="3.90.1150.190">
    <property type="entry name" value="SLED domain"/>
    <property type="match status" value="1"/>
</dbReference>
<dbReference type="Gene3D" id="1.10.150.50">
    <property type="entry name" value="Transcription Factor, Ets-1"/>
    <property type="match status" value="1"/>
</dbReference>
<dbReference type="InterPro" id="IPR004092">
    <property type="entry name" value="Mbt"/>
</dbReference>
<dbReference type="InterPro" id="IPR047352">
    <property type="entry name" value="MBT_SFMBT1_rpt2"/>
</dbReference>
<dbReference type="InterPro" id="IPR047351">
    <property type="entry name" value="MBT_SFMBT1_rpt3"/>
</dbReference>
<dbReference type="InterPro" id="IPR050548">
    <property type="entry name" value="PcG_chromatin_remod_factors"/>
</dbReference>
<dbReference type="InterPro" id="IPR001660">
    <property type="entry name" value="SAM"/>
</dbReference>
<dbReference type="InterPro" id="IPR013761">
    <property type="entry name" value="SAM/pointed_sf"/>
</dbReference>
<dbReference type="InterPro" id="IPR037604">
    <property type="entry name" value="Scm-like-4MBT1/2_SAM"/>
</dbReference>
<dbReference type="InterPro" id="IPR021987">
    <property type="entry name" value="SLED"/>
</dbReference>
<dbReference type="InterPro" id="IPR038348">
    <property type="entry name" value="SLED_sf"/>
</dbReference>
<dbReference type="PANTHER" id="PTHR12247">
    <property type="entry name" value="POLYCOMB GROUP PROTEIN"/>
    <property type="match status" value="1"/>
</dbReference>
<dbReference type="PANTHER" id="PTHR12247:SF77">
    <property type="entry name" value="SCM-LIKE WITH FOUR MBT DOMAINS PROTEIN 1"/>
    <property type="match status" value="1"/>
</dbReference>
<dbReference type="Pfam" id="PF02820">
    <property type="entry name" value="MBT"/>
    <property type="match status" value="4"/>
</dbReference>
<dbReference type="Pfam" id="PF00536">
    <property type="entry name" value="SAM_1"/>
    <property type="match status" value="1"/>
</dbReference>
<dbReference type="Pfam" id="PF12140">
    <property type="entry name" value="SLED"/>
    <property type="match status" value="1"/>
</dbReference>
<dbReference type="SMART" id="SM00561">
    <property type="entry name" value="MBT"/>
    <property type="match status" value="4"/>
</dbReference>
<dbReference type="SMART" id="SM00454">
    <property type="entry name" value="SAM"/>
    <property type="match status" value="1"/>
</dbReference>
<dbReference type="SUPFAM" id="SSF47769">
    <property type="entry name" value="SAM/Pointed domain"/>
    <property type="match status" value="1"/>
</dbReference>
<dbReference type="SUPFAM" id="SSF63748">
    <property type="entry name" value="Tudor/PWWP/MBT"/>
    <property type="match status" value="4"/>
</dbReference>
<dbReference type="PROSITE" id="PS51079">
    <property type="entry name" value="MBT"/>
    <property type="match status" value="4"/>
</dbReference>
<feature type="chain" id="PRO_0000071966" description="Scm-like with four MBT domains protein 1">
    <location>
        <begin position="1"/>
        <end position="866"/>
    </location>
</feature>
<feature type="repeat" description="MBT 1">
    <location>
        <begin position="20"/>
        <end position="120"/>
    </location>
</feature>
<feature type="repeat" description="MBT 2">
    <location>
        <begin position="128"/>
        <end position="232"/>
    </location>
</feature>
<feature type="repeat" description="MBT 3">
    <location>
        <begin position="242"/>
        <end position="348"/>
    </location>
</feature>
<feature type="repeat" description="MBT 4">
    <location>
        <begin position="356"/>
        <end position="453"/>
    </location>
</feature>
<feature type="domain" description="SAM">
    <location>
        <begin position="796"/>
        <end position="864"/>
    </location>
</feature>
<feature type="region of interest" description="Antigenic epitope">
    <location>
        <begin position="34"/>
        <end position="42"/>
    </location>
</feature>
<feature type="region of interest" description="Disordered" evidence="3">
    <location>
        <begin position="641"/>
        <end position="777"/>
    </location>
</feature>
<feature type="compositionally biased region" description="Basic residues" evidence="3">
    <location>
        <begin position="663"/>
        <end position="682"/>
    </location>
</feature>
<feature type="compositionally biased region" description="Polar residues" evidence="3">
    <location>
        <begin position="683"/>
        <end position="694"/>
    </location>
</feature>
<feature type="compositionally biased region" description="Acidic residues" evidence="3">
    <location>
        <begin position="699"/>
        <end position="713"/>
    </location>
</feature>
<feature type="compositionally biased region" description="Acidic residues" evidence="3">
    <location>
        <begin position="721"/>
        <end position="730"/>
    </location>
</feature>
<feature type="compositionally biased region" description="Low complexity" evidence="3">
    <location>
        <begin position="737"/>
        <end position="749"/>
    </location>
</feature>
<feature type="modified residue" description="Phosphoserine" evidence="11">
    <location>
        <position position="767"/>
    </location>
</feature>
<feature type="modified residue" description="Phosphoserine" evidence="10 11">
    <location>
        <position position="775"/>
    </location>
</feature>
<feature type="splice variant" id="VSP_013857" description="In isoform 2." evidence="8">
    <location>
        <begin position="778"/>
        <end position="820"/>
    </location>
</feature>
<feature type="mutagenesis site" description="Reduced histone-binding." evidence="7">
    <original>F</original>
    <variation>A</variation>
    <location>
        <position position="173"/>
    </location>
</feature>
<feature type="mutagenesis site" description="Abolishes histone-binding." evidence="7">
    <original>W</original>
    <variation>A</variation>
    <location>
        <position position="180"/>
    </location>
</feature>
<feature type="mutagenesis site" description="Reduced histone-binding." evidence="7">
    <original>Y</original>
    <variation>A</variation>
    <location>
        <position position="196"/>
    </location>
</feature>
<feature type="sequence conflict" description="In Ref. 1; AAF19794." evidence="9" ref="1">
    <original>K</original>
    <variation>R</variation>
    <location>
        <position position="642"/>
    </location>
</feature>
<feature type="sequence conflict" description="In Ref. 1; AAF19794." evidence="9" ref="1">
    <original>S</original>
    <variation>F</variation>
    <location>
        <position position="767"/>
    </location>
</feature>
<name>SMBT1_HUMAN</name>
<reference key="1">
    <citation type="journal article" date="2000" name="Immunity">
        <title>Processing of some antigens by the standard proteasome but not by the immunoproteasome results in poor presentation by dendritic cells.</title>
        <authorList>
            <person name="Morel S."/>
            <person name="Levy F."/>
            <person name="Burlet-Schiltz O."/>
            <person name="Brasseur F."/>
            <person name="Probst-Kepper M."/>
            <person name="Peitrequin A.L."/>
            <person name="Monsarrat B."/>
            <person name="Van Velthoven R."/>
            <person name="Cerottini J.C."/>
            <person name="Boon T."/>
            <person name="Gairin J.E."/>
            <person name="Van den Eynde B.J."/>
        </authorList>
    </citation>
    <scope>NUCLEOTIDE SEQUENCE [MRNA] (ISOFORM 1)</scope>
    <scope>TISSUE SPECIFICITY</scope>
</reference>
<reference key="2">
    <citation type="submission" date="2004-08" db="EMBL/GenBank/DDBJ databases">
        <title>SFMBT and H-L(3)MBT interact with each other and regulate HOX expression and cell proliferation.</title>
        <authorList>
            <person name="Usui H."/>
            <person name="Ichikawa T."/>
            <person name="Kobayashi K."/>
            <person name="Kumanishi T."/>
        </authorList>
    </citation>
    <scope>NUCLEOTIDE SEQUENCE [MRNA]</scope>
</reference>
<reference key="3">
    <citation type="journal article" date="2004" name="Nat. Genet.">
        <title>Complete sequencing and characterization of 21,243 full-length human cDNAs.</title>
        <authorList>
            <person name="Ota T."/>
            <person name="Suzuki Y."/>
            <person name="Nishikawa T."/>
            <person name="Otsuki T."/>
            <person name="Sugiyama T."/>
            <person name="Irie R."/>
            <person name="Wakamatsu A."/>
            <person name="Hayashi K."/>
            <person name="Sato H."/>
            <person name="Nagai K."/>
            <person name="Kimura K."/>
            <person name="Makita H."/>
            <person name="Sekine M."/>
            <person name="Obayashi M."/>
            <person name="Nishi T."/>
            <person name="Shibahara T."/>
            <person name="Tanaka T."/>
            <person name="Ishii S."/>
            <person name="Yamamoto J."/>
            <person name="Saito K."/>
            <person name="Kawai Y."/>
            <person name="Isono Y."/>
            <person name="Nakamura Y."/>
            <person name="Nagahari K."/>
            <person name="Murakami K."/>
            <person name="Yasuda T."/>
            <person name="Iwayanagi T."/>
            <person name="Wagatsuma M."/>
            <person name="Shiratori A."/>
            <person name="Sudo H."/>
            <person name="Hosoiri T."/>
            <person name="Kaku Y."/>
            <person name="Kodaira H."/>
            <person name="Kondo H."/>
            <person name="Sugawara M."/>
            <person name="Takahashi M."/>
            <person name="Kanda K."/>
            <person name="Yokoi T."/>
            <person name="Furuya T."/>
            <person name="Kikkawa E."/>
            <person name="Omura Y."/>
            <person name="Abe K."/>
            <person name="Kamihara K."/>
            <person name="Katsuta N."/>
            <person name="Sato K."/>
            <person name="Tanikawa M."/>
            <person name="Yamazaki M."/>
            <person name="Ninomiya K."/>
            <person name="Ishibashi T."/>
            <person name="Yamashita H."/>
            <person name="Murakawa K."/>
            <person name="Fujimori K."/>
            <person name="Tanai H."/>
            <person name="Kimata M."/>
            <person name="Watanabe M."/>
            <person name="Hiraoka S."/>
            <person name="Chiba Y."/>
            <person name="Ishida S."/>
            <person name="Ono Y."/>
            <person name="Takiguchi S."/>
            <person name="Watanabe S."/>
            <person name="Yosida M."/>
            <person name="Hotuta T."/>
            <person name="Kusano J."/>
            <person name="Kanehori K."/>
            <person name="Takahashi-Fujii A."/>
            <person name="Hara H."/>
            <person name="Tanase T.-O."/>
            <person name="Nomura Y."/>
            <person name="Togiya S."/>
            <person name="Komai F."/>
            <person name="Hara R."/>
            <person name="Takeuchi K."/>
            <person name="Arita M."/>
            <person name="Imose N."/>
            <person name="Musashino K."/>
            <person name="Yuuki H."/>
            <person name="Oshima A."/>
            <person name="Sasaki N."/>
            <person name="Aotsuka S."/>
            <person name="Yoshikawa Y."/>
            <person name="Matsunawa H."/>
            <person name="Ichihara T."/>
            <person name="Shiohata N."/>
            <person name="Sano S."/>
            <person name="Moriya S."/>
            <person name="Momiyama H."/>
            <person name="Satoh N."/>
            <person name="Takami S."/>
            <person name="Terashima Y."/>
            <person name="Suzuki O."/>
            <person name="Nakagawa S."/>
            <person name="Senoh A."/>
            <person name="Mizoguchi H."/>
            <person name="Goto Y."/>
            <person name="Shimizu F."/>
            <person name="Wakebe H."/>
            <person name="Hishigaki H."/>
            <person name="Watanabe T."/>
            <person name="Sugiyama A."/>
            <person name="Takemoto M."/>
            <person name="Kawakami B."/>
            <person name="Yamazaki M."/>
            <person name="Watanabe K."/>
            <person name="Kumagai A."/>
            <person name="Itakura S."/>
            <person name="Fukuzumi Y."/>
            <person name="Fujimori Y."/>
            <person name="Komiyama M."/>
            <person name="Tashiro H."/>
            <person name="Tanigami A."/>
            <person name="Fujiwara T."/>
            <person name="Ono T."/>
            <person name="Yamada K."/>
            <person name="Fujii Y."/>
            <person name="Ozaki K."/>
            <person name="Hirao M."/>
            <person name="Ohmori Y."/>
            <person name="Kawabata A."/>
            <person name="Hikiji T."/>
            <person name="Kobatake N."/>
            <person name="Inagaki H."/>
            <person name="Ikema Y."/>
            <person name="Okamoto S."/>
            <person name="Okitani R."/>
            <person name="Kawakami T."/>
            <person name="Noguchi S."/>
            <person name="Itoh T."/>
            <person name="Shigeta K."/>
            <person name="Senba T."/>
            <person name="Matsumura K."/>
            <person name="Nakajima Y."/>
            <person name="Mizuno T."/>
            <person name="Morinaga M."/>
            <person name="Sasaki M."/>
            <person name="Togashi T."/>
            <person name="Oyama M."/>
            <person name="Hata H."/>
            <person name="Watanabe M."/>
            <person name="Komatsu T."/>
            <person name="Mizushima-Sugano J."/>
            <person name="Satoh T."/>
            <person name="Shirai Y."/>
            <person name="Takahashi Y."/>
            <person name="Nakagawa K."/>
            <person name="Okumura K."/>
            <person name="Nagase T."/>
            <person name="Nomura N."/>
            <person name="Kikuchi H."/>
            <person name="Masuho Y."/>
            <person name="Yamashita R."/>
            <person name="Nakai K."/>
            <person name="Yada T."/>
            <person name="Nakamura Y."/>
            <person name="Ohara O."/>
            <person name="Isogai T."/>
            <person name="Sugano S."/>
        </authorList>
    </citation>
    <scope>NUCLEOTIDE SEQUENCE [LARGE SCALE MRNA] (ISOFORM 1)</scope>
    <source>
        <tissue>Testis</tissue>
    </source>
</reference>
<reference key="4">
    <citation type="journal article" date="2006" name="Nature">
        <title>The DNA sequence, annotation and analysis of human chromosome 3.</title>
        <authorList>
            <person name="Muzny D.M."/>
            <person name="Scherer S.E."/>
            <person name="Kaul R."/>
            <person name="Wang J."/>
            <person name="Yu J."/>
            <person name="Sudbrak R."/>
            <person name="Buhay C.J."/>
            <person name="Chen R."/>
            <person name="Cree A."/>
            <person name="Ding Y."/>
            <person name="Dugan-Rocha S."/>
            <person name="Gill R."/>
            <person name="Gunaratne P."/>
            <person name="Harris R.A."/>
            <person name="Hawes A.C."/>
            <person name="Hernandez J."/>
            <person name="Hodgson A.V."/>
            <person name="Hume J."/>
            <person name="Jackson A."/>
            <person name="Khan Z.M."/>
            <person name="Kovar-Smith C."/>
            <person name="Lewis L.R."/>
            <person name="Lozado R.J."/>
            <person name="Metzker M.L."/>
            <person name="Milosavljevic A."/>
            <person name="Miner G.R."/>
            <person name="Morgan M.B."/>
            <person name="Nazareth L.V."/>
            <person name="Scott G."/>
            <person name="Sodergren E."/>
            <person name="Song X.-Z."/>
            <person name="Steffen D."/>
            <person name="Wei S."/>
            <person name="Wheeler D.A."/>
            <person name="Wright M.W."/>
            <person name="Worley K.C."/>
            <person name="Yuan Y."/>
            <person name="Zhang Z."/>
            <person name="Adams C.Q."/>
            <person name="Ansari-Lari M.A."/>
            <person name="Ayele M."/>
            <person name="Brown M.J."/>
            <person name="Chen G."/>
            <person name="Chen Z."/>
            <person name="Clendenning J."/>
            <person name="Clerc-Blankenburg K.P."/>
            <person name="Chen R."/>
            <person name="Chen Z."/>
            <person name="Davis C."/>
            <person name="Delgado O."/>
            <person name="Dinh H.H."/>
            <person name="Dong W."/>
            <person name="Draper H."/>
            <person name="Ernst S."/>
            <person name="Fu G."/>
            <person name="Gonzalez-Garay M.L."/>
            <person name="Garcia D.K."/>
            <person name="Gillett W."/>
            <person name="Gu J."/>
            <person name="Hao B."/>
            <person name="Haugen E."/>
            <person name="Havlak P."/>
            <person name="He X."/>
            <person name="Hennig S."/>
            <person name="Hu S."/>
            <person name="Huang W."/>
            <person name="Jackson L.R."/>
            <person name="Jacob L.S."/>
            <person name="Kelly S.H."/>
            <person name="Kube M."/>
            <person name="Levy R."/>
            <person name="Li Z."/>
            <person name="Liu B."/>
            <person name="Liu J."/>
            <person name="Liu W."/>
            <person name="Lu J."/>
            <person name="Maheshwari M."/>
            <person name="Nguyen B.-V."/>
            <person name="Okwuonu G.O."/>
            <person name="Palmeiri A."/>
            <person name="Pasternak S."/>
            <person name="Perez L.M."/>
            <person name="Phelps K.A."/>
            <person name="Plopper F.J."/>
            <person name="Qiang B."/>
            <person name="Raymond C."/>
            <person name="Rodriguez R."/>
            <person name="Saenphimmachak C."/>
            <person name="Santibanez J."/>
            <person name="Shen H."/>
            <person name="Shen Y."/>
            <person name="Subramanian S."/>
            <person name="Tabor P.E."/>
            <person name="Verduzco D."/>
            <person name="Waldron L."/>
            <person name="Wang J."/>
            <person name="Wang J."/>
            <person name="Wang Q."/>
            <person name="Williams G.A."/>
            <person name="Wong G.K.-S."/>
            <person name="Yao Z."/>
            <person name="Zhang J."/>
            <person name="Zhang X."/>
            <person name="Zhao G."/>
            <person name="Zhou J."/>
            <person name="Zhou Y."/>
            <person name="Nelson D."/>
            <person name="Lehrach H."/>
            <person name="Reinhardt R."/>
            <person name="Naylor S.L."/>
            <person name="Yang H."/>
            <person name="Olson M."/>
            <person name="Weinstock G."/>
            <person name="Gibbs R.A."/>
        </authorList>
    </citation>
    <scope>NUCLEOTIDE SEQUENCE [LARGE SCALE GENOMIC DNA]</scope>
</reference>
<reference key="5">
    <citation type="submission" date="2005-07" db="EMBL/GenBank/DDBJ databases">
        <authorList>
            <person name="Mural R.J."/>
            <person name="Istrail S."/>
            <person name="Sutton G.G."/>
            <person name="Florea L."/>
            <person name="Halpern A.L."/>
            <person name="Mobarry C.M."/>
            <person name="Lippert R."/>
            <person name="Walenz B."/>
            <person name="Shatkay H."/>
            <person name="Dew I."/>
            <person name="Miller J.R."/>
            <person name="Flanigan M.J."/>
            <person name="Edwards N.J."/>
            <person name="Bolanos R."/>
            <person name="Fasulo D."/>
            <person name="Halldorsson B.V."/>
            <person name="Hannenhalli S."/>
            <person name="Turner R."/>
            <person name="Yooseph S."/>
            <person name="Lu F."/>
            <person name="Nusskern D.R."/>
            <person name="Shue B.C."/>
            <person name="Zheng X.H."/>
            <person name="Zhong F."/>
            <person name="Delcher A.L."/>
            <person name="Huson D.H."/>
            <person name="Kravitz S.A."/>
            <person name="Mouchard L."/>
            <person name="Reinert K."/>
            <person name="Remington K.A."/>
            <person name="Clark A.G."/>
            <person name="Waterman M.S."/>
            <person name="Eichler E.E."/>
            <person name="Adams M.D."/>
            <person name="Hunkapiller M.W."/>
            <person name="Myers E.W."/>
            <person name="Venter J.C."/>
        </authorList>
    </citation>
    <scope>NUCLEOTIDE SEQUENCE [LARGE SCALE GENOMIC DNA]</scope>
</reference>
<reference key="6">
    <citation type="journal article" date="2004" name="Genome Res.">
        <title>The status, quality, and expansion of the NIH full-length cDNA project: the Mammalian Gene Collection (MGC).</title>
        <authorList>
            <consortium name="The MGC Project Team"/>
        </authorList>
    </citation>
    <scope>NUCLEOTIDE SEQUENCE [LARGE SCALE MRNA] (ISOFORM 1)</scope>
    <source>
        <tissue>Muscle</tissue>
    </source>
</reference>
<reference key="7">
    <citation type="journal article" date="2007" name="BMC Genomics">
        <title>The full-ORF clone resource of the German cDNA consortium.</title>
        <authorList>
            <person name="Bechtel S."/>
            <person name="Rosenfelder H."/>
            <person name="Duda A."/>
            <person name="Schmidt C.P."/>
            <person name="Ernst U."/>
            <person name="Wellenreuther R."/>
            <person name="Mehrle A."/>
            <person name="Schuster C."/>
            <person name="Bahr A."/>
            <person name="Bloecker H."/>
            <person name="Heubner D."/>
            <person name="Hoerlein A."/>
            <person name="Michel G."/>
            <person name="Wedler H."/>
            <person name="Koehrer K."/>
            <person name="Ottenwaelder B."/>
            <person name="Poustka A."/>
            <person name="Wiemann S."/>
            <person name="Schupp I."/>
        </authorList>
    </citation>
    <scope>NUCLEOTIDE SEQUENCE [LARGE SCALE MRNA] OF 113-866 (ISOFORM 2)</scope>
    <source>
        <tissue>Testis</tissue>
    </source>
</reference>
<reference key="8">
    <citation type="journal article" date="2007" name="FEBS Lett.">
        <title>Human SFMBT is a transcriptional repressor protein that selectively binds the N-terminal tail of histone H3.</title>
        <authorList>
            <person name="Wu S."/>
            <person name="Trievel R.C."/>
            <person name="Rice J.C."/>
        </authorList>
    </citation>
    <scope>FUNCTION</scope>
    <scope>SUBCELLULAR LOCATION</scope>
    <scope>INTERACTION WITH HISTONES</scope>
</reference>
<reference key="9">
    <citation type="journal article" date="2008" name="Proc. Natl. Acad. Sci. U.S.A.">
        <title>A quantitative atlas of mitotic phosphorylation.</title>
        <authorList>
            <person name="Dephoure N."/>
            <person name="Zhou C."/>
            <person name="Villen J."/>
            <person name="Beausoleil S.A."/>
            <person name="Bakalarski C.E."/>
            <person name="Elledge S.J."/>
            <person name="Gygi S.P."/>
        </authorList>
    </citation>
    <scope>PHOSPHORYLATION [LARGE SCALE ANALYSIS] AT SER-775</scope>
    <scope>IDENTIFICATION BY MASS SPECTROMETRY [LARGE SCALE ANALYSIS]</scope>
    <source>
        <tissue>Cervix carcinoma</tissue>
    </source>
</reference>
<reference key="10">
    <citation type="journal article" date="2013" name="Genes Dev.">
        <title>SFMBT1 functions with LSD1 to regulate expression of canonical histone genes and chromatin-related factors.</title>
        <authorList>
            <person name="Zhang J."/>
            <person name="Bonasio R."/>
            <person name="Strino F."/>
            <person name="Kluger Y."/>
            <person name="Holloway J.K."/>
            <person name="Modzelewski A.J."/>
            <person name="Cohen P.E."/>
            <person name="Reinberg D."/>
        </authorList>
    </citation>
    <scope>FUNCTION</scope>
    <scope>INTERACTION WITH KDM1A AND RCOR1</scope>
    <scope>IDENTIFICATION IN THE SLC COMPLEX</scope>
    <scope>MUTAGENESIS OF PHE-173; TRP-180 AND TYR-196</scope>
</reference>
<reference key="11">
    <citation type="journal article" date="2013" name="J. Biol. Chem.">
        <title>Proteomic and functional analyses reveal the role of chromatin reader SFMBT1 in regulating epigenetic silencing and the myogenic gene program.</title>
        <authorList>
            <person name="Lin S."/>
            <person name="Shen H."/>
            <person name="Li J.L."/>
            <person name="Tang S."/>
            <person name="Gu Y."/>
            <person name="Chen Z."/>
            <person name="Hu C."/>
            <person name="Rice J.C."/>
            <person name="Lu J."/>
            <person name="Wu L."/>
        </authorList>
    </citation>
    <scope>FUNCTION</scope>
    <scope>IDENTIFICATION IN VARIOUS COREPRESSOR COMPLEX</scope>
</reference>
<reference key="12">
    <citation type="journal article" date="2013" name="J. Proteome Res.">
        <title>Toward a comprehensive characterization of a human cancer cell phosphoproteome.</title>
        <authorList>
            <person name="Zhou H."/>
            <person name="Di Palma S."/>
            <person name="Preisinger C."/>
            <person name="Peng M."/>
            <person name="Polat A.N."/>
            <person name="Heck A.J."/>
            <person name="Mohammed S."/>
        </authorList>
    </citation>
    <scope>PHOSPHORYLATION [LARGE SCALE ANALYSIS] AT SER-767 AND SER-775</scope>
    <scope>IDENTIFICATION BY MASS SPECTROMETRY [LARGE SCALE ANALYSIS]</scope>
    <source>
        <tissue>Cervix carcinoma</tissue>
        <tissue>Erythroleukemia</tissue>
    </source>
</reference>
<keyword id="KW-0025">Alternative splicing</keyword>
<keyword id="KW-0156">Chromatin regulator</keyword>
<keyword id="KW-0221">Differentiation</keyword>
<keyword id="KW-0539">Nucleus</keyword>
<keyword id="KW-0597">Phosphoprotein</keyword>
<keyword id="KW-1267">Proteomics identification</keyword>
<keyword id="KW-1185">Reference proteome</keyword>
<keyword id="KW-0677">Repeat</keyword>
<keyword id="KW-0678">Repressor</keyword>
<keyword id="KW-0744">Spermatogenesis</keyword>
<keyword id="KW-0804">Transcription</keyword>
<keyword id="KW-0805">Transcription regulation</keyword>
<proteinExistence type="evidence at protein level"/>
<comment type="function">
    <text evidence="5 6 7">Histone-binding protein, which is part of various corepressor complexes. Mediates the recruitment of corepressor complexes to target genes, followed by chromatin compaction and repression of transcription. Plays a role during myogenesis: required for the maintenance of undifferentiated states of myogenic progenitor cells via interaction with MYOD1. Interaction with MYOD1 leads to the recruitment of associated corepressors and silencing of MYOD1 target genes. Part of the SLC complex in germ cells, where it may play a role during spermatogenesis.</text>
</comment>
<comment type="subunit">
    <text evidence="1 2 5 6 7">Interacts with MYOD1 (By similarity). Component of the SLC (SFMBT1-LSD1-CoREST) corepressor complex, which also contains KDM1A/LSD1 and RCOR1/CoREST. Interacts with KDM1A/LSD1 and RCOR1/CoREST. Interacts with L3MBTL3 (By similarity).</text>
</comment>
<comment type="interaction">
    <interactant intactId="EBI-747398">
        <id>Q9UHJ3</id>
    </interactant>
    <interactant intactId="EBI-745689">
        <id>Q7L5A3</id>
        <label>ATOSB</label>
    </interactant>
    <organismsDiffer>false</organismsDiffer>
    <experiments>3</experiments>
</comment>
<comment type="interaction">
    <interactant intactId="EBI-747398">
        <id>Q9UHJ3</id>
    </interactant>
    <interactant intactId="EBI-358900">
        <id>Q16695</id>
        <label>H3-4</label>
    </interactant>
    <organismsDiffer>false</organismsDiffer>
    <experiments>4</experiments>
</comment>
<comment type="interaction">
    <interactant intactId="EBI-747398">
        <id>Q9UHJ3</id>
    </interactant>
    <interactant intactId="EBI-745290">
        <id>P17482</id>
        <label>HOXB9</label>
    </interactant>
    <organismsDiffer>false</organismsDiffer>
    <experiments>3</experiments>
</comment>
<comment type="interaction">
    <interactant intactId="EBI-747398">
        <id>Q9UHJ3</id>
    </interactant>
    <interactant intactId="EBI-713786">
        <id>Q8IXK0</id>
        <label>PHC2</label>
    </interactant>
    <organismsDiffer>false</organismsDiffer>
    <experiments>4</experiments>
</comment>
<comment type="interaction">
    <interactant intactId="EBI-747398">
        <id>Q9UHJ3</id>
    </interactant>
    <interactant intactId="EBI-713793">
        <id>Q96GD3</id>
        <label>SCMH1</label>
    </interactant>
    <organismsDiffer>false</organismsDiffer>
    <experiments>3</experiments>
</comment>
<comment type="interaction">
    <interactant intactId="EBI-747398">
        <id>Q9UHJ3</id>
    </interactant>
    <interactant intactId="EBI-12023934">
        <id>Q5MJ10</id>
        <label>SPANXN2</label>
    </interactant>
    <organismsDiffer>false</organismsDiffer>
    <experiments>3</experiments>
</comment>
<comment type="interaction">
    <interactant intactId="EBI-747398">
        <id>Q9UHJ3</id>
    </interactant>
    <interactant intactId="EBI-597063">
        <id>Q8TBK6</id>
        <label>ZCCHC10</label>
    </interactant>
    <organismsDiffer>false</organismsDiffer>
    <experiments>6</experiments>
</comment>
<comment type="subcellular location">
    <subcellularLocation>
        <location evidence="5">Nucleus</location>
    </subcellularLocation>
</comment>
<comment type="alternative products">
    <event type="alternative splicing"/>
    <isoform>
        <id>Q9UHJ3-1</id>
        <name>1</name>
        <sequence type="displayed"/>
    </isoform>
    <isoform>
        <id>Q9UHJ3-2</id>
        <name>2</name>
        <sequence type="described" ref="VSP_013857"/>
    </isoform>
</comment>
<comment type="tissue specificity">
    <text evidence="4">Expressed in all cell lines and normal tissues tested, including the thymus.</text>
</comment>
<comment type="domain">
    <text evidence="7">The MBT repeats mediate binding to histones tails; however, in contrast to other MBT repeats, does not bind specific histone lysine modifications. The MBT repeats lack the conserved Asp and aromatic cage at conserved positions (PubMed:23592795).</text>
</comment>
<evidence type="ECO:0000250" key="1"/>
<evidence type="ECO:0000250" key="2">
    <source>
        <dbReference type="UniProtKB" id="Q9JMD1"/>
    </source>
</evidence>
<evidence type="ECO:0000256" key="3">
    <source>
        <dbReference type="SAM" id="MobiDB-lite"/>
    </source>
</evidence>
<evidence type="ECO:0000269" key="4">
    <source>
    </source>
</evidence>
<evidence type="ECO:0000269" key="5">
    <source>
    </source>
</evidence>
<evidence type="ECO:0000269" key="6">
    <source>
    </source>
</evidence>
<evidence type="ECO:0000269" key="7">
    <source>
    </source>
</evidence>
<evidence type="ECO:0000303" key="8">
    <source>
    </source>
</evidence>
<evidence type="ECO:0000305" key="9"/>
<evidence type="ECO:0007744" key="10">
    <source>
    </source>
</evidence>
<evidence type="ECO:0007744" key="11">
    <source>
    </source>
</evidence>
<accession>Q9UHJ3</accession>
<accession>Q402F7</accession>
<accession>Q96C73</accession>
<accession>Q9Y4Q9</accession>